<protein>
    <recommendedName>
        <fullName>Putative cation-transporting ATPase MJ1226</fullName>
        <ecNumber>7.2.2.-</ecNumber>
    </recommendedName>
</protein>
<keyword id="KW-0067">ATP-binding</keyword>
<keyword id="KW-1003">Cell membrane</keyword>
<keyword id="KW-0472">Membrane</keyword>
<keyword id="KW-0547">Nucleotide-binding</keyword>
<keyword id="KW-0597">Phosphoprotein</keyword>
<keyword id="KW-1185">Reference proteome</keyword>
<keyword id="KW-1278">Translocase</keyword>
<keyword id="KW-0812">Transmembrane</keyword>
<keyword id="KW-1133">Transmembrane helix</keyword>
<accession>Q58623</accession>
<evidence type="ECO:0000250" key="1"/>
<evidence type="ECO:0000255" key="2"/>
<evidence type="ECO:0000305" key="3"/>
<reference key="1">
    <citation type="journal article" date="1996" name="Science">
        <title>Complete genome sequence of the methanogenic archaeon, Methanococcus jannaschii.</title>
        <authorList>
            <person name="Bult C.J."/>
            <person name="White O."/>
            <person name="Olsen G.J."/>
            <person name="Zhou L."/>
            <person name="Fleischmann R.D."/>
            <person name="Sutton G.G."/>
            <person name="Blake J.A."/>
            <person name="FitzGerald L.M."/>
            <person name="Clayton R.A."/>
            <person name="Gocayne J.D."/>
            <person name="Kerlavage A.R."/>
            <person name="Dougherty B.A."/>
            <person name="Tomb J.-F."/>
            <person name="Adams M.D."/>
            <person name="Reich C.I."/>
            <person name="Overbeek R."/>
            <person name="Kirkness E.F."/>
            <person name="Weinstock K.G."/>
            <person name="Merrick J.M."/>
            <person name="Glodek A."/>
            <person name="Scott J.L."/>
            <person name="Geoghagen N.S.M."/>
            <person name="Weidman J.F."/>
            <person name="Fuhrmann J.L."/>
            <person name="Nguyen D."/>
            <person name="Utterback T.R."/>
            <person name="Kelley J.M."/>
            <person name="Peterson J.D."/>
            <person name="Sadow P.W."/>
            <person name="Hanna M.C."/>
            <person name="Cotton M.D."/>
            <person name="Roberts K.M."/>
            <person name="Hurst M.A."/>
            <person name="Kaine B.P."/>
            <person name="Borodovsky M."/>
            <person name="Klenk H.-P."/>
            <person name="Fraser C.M."/>
            <person name="Smith H.O."/>
            <person name="Woese C.R."/>
            <person name="Venter J.C."/>
        </authorList>
    </citation>
    <scope>NUCLEOTIDE SEQUENCE [LARGE SCALE GENOMIC DNA]</scope>
    <source>
        <strain>ATCC 43067 / DSM 2661 / JAL-1 / JCM 10045 / NBRC 100440</strain>
    </source>
</reference>
<sequence length="805" mass="89618">MWGVVMNVEEIEEEYKTSIKTGLSTEEAKKRLKIYGYNEIPEKKVHPIIKFLSYFWNPIAWMIEIAAILSAIIKHWVDFVIILILLLVNGVVGFWEEYKAENVIEFLKQKMALNARVLRDGKWQIIPAKELVPGDVVRIRIGDIVPADIILVDGDYLVVDESALTGESLPVEKKIGDIAYSGSIVKKGEMTGIVKATGLNTYFGKTVKLVEKAEKVSSYQKMIIKIGDYLIVLAVILIAIMVAVELFRGKSLIETAQFALVLAVSAIPAAMPAVLSITMAIGALNLAKKDAIVKKLVAIEELAGVDILCSDKTGTLTKNQLVCGEIIALNGFSKEDVVLFAALASREEDADAIDMAILNEAKKLGLMEKIKNYKIKKFIPFDPVIKRTEAEVTNDEEFKVSKGAPQVILDLCNADEELRRKVEEIVDKLAENGYRALGVAVYKNGRWHFAGIIPLYDPPREDAPLAVKKIKELGVIIKMVTGDHVAIAKNIARMLGIGDKIISISELLKKLKRGEIKEEKFDEIVEEADGFAEVFPEHKYKIVDSLQKRGHLVAMTGDGVNDAPALKKADCGIAVSNATDAARAAADIVLLSPGISVIVDAIQEARRIFQRMESYVIYRITETIRILFFVELCILILGIYPITALMIVLLAILNDIPILAIAYDNVVEPKSPVRWRMREILMLSTALGLSGVVSSFLIFYISDVFLHLTIAELQSFVFLKLILAGHATIFVTRIRDRLWKKPYPSKLLFWGVMGTNIIGTIVAAEGIFMAPIGWDLALFMWLYAHVWMLINDEIKMILLKRLKID</sequence>
<proteinExistence type="inferred from homology"/>
<feature type="chain" id="PRO_0000046427" description="Putative cation-transporting ATPase MJ1226">
    <location>
        <begin position="1"/>
        <end position="805"/>
    </location>
</feature>
<feature type="transmembrane region" description="Helical" evidence="2">
    <location>
        <begin position="53"/>
        <end position="73"/>
    </location>
</feature>
<feature type="transmembrane region" description="Helical" evidence="2">
    <location>
        <begin position="75"/>
        <end position="95"/>
    </location>
</feature>
<feature type="transmembrane region" description="Helical" evidence="2">
    <location>
        <begin position="226"/>
        <end position="246"/>
    </location>
</feature>
<feature type="transmembrane region" description="Helical" evidence="2">
    <location>
        <begin position="258"/>
        <end position="278"/>
    </location>
</feature>
<feature type="transmembrane region" description="Helical" evidence="2">
    <location>
        <begin position="615"/>
        <end position="637"/>
    </location>
</feature>
<feature type="transmembrane region" description="Helical" evidence="2">
    <location>
        <begin position="641"/>
        <end position="663"/>
    </location>
</feature>
<feature type="transmembrane region" description="Helical" evidence="2">
    <location>
        <begin position="680"/>
        <end position="700"/>
    </location>
</feature>
<feature type="transmembrane region" description="Helical" evidence="2">
    <location>
        <begin position="712"/>
        <end position="734"/>
    </location>
</feature>
<feature type="transmembrane region" description="Helical" evidence="2">
    <location>
        <begin position="747"/>
        <end position="769"/>
    </location>
</feature>
<feature type="transmembrane region" description="Helical" evidence="2">
    <location>
        <begin position="773"/>
        <end position="790"/>
    </location>
</feature>
<feature type="active site" description="4-aspartylphosphate intermediate" evidence="1">
    <location>
        <position position="311"/>
    </location>
</feature>
<gene>
    <name type="ordered locus">MJ1226</name>
</gene>
<comment type="catalytic activity">
    <reaction>
        <text>ATP + H2O = ADP + phosphate + H(+)</text>
        <dbReference type="Rhea" id="RHEA:13065"/>
        <dbReference type="ChEBI" id="CHEBI:15377"/>
        <dbReference type="ChEBI" id="CHEBI:15378"/>
        <dbReference type="ChEBI" id="CHEBI:30616"/>
        <dbReference type="ChEBI" id="CHEBI:43474"/>
        <dbReference type="ChEBI" id="CHEBI:456216"/>
    </reaction>
</comment>
<comment type="subcellular location">
    <subcellularLocation>
        <location evidence="3">Cell membrane</location>
        <topology evidence="3">Multi-pass membrane protein</topology>
    </subcellularLocation>
</comment>
<comment type="similarity">
    <text evidence="3">Belongs to the cation transport ATPase (P-type) (TC 3.A.3) family. Type IIIA subfamily.</text>
</comment>
<organism>
    <name type="scientific">Methanocaldococcus jannaschii (strain ATCC 43067 / DSM 2661 / JAL-1 / JCM 10045 / NBRC 100440)</name>
    <name type="common">Methanococcus jannaschii</name>
    <dbReference type="NCBI Taxonomy" id="243232"/>
    <lineage>
        <taxon>Archaea</taxon>
        <taxon>Methanobacteriati</taxon>
        <taxon>Methanobacteriota</taxon>
        <taxon>Methanomada group</taxon>
        <taxon>Methanococci</taxon>
        <taxon>Methanococcales</taxon>
        <taxon>Methanocaldococcaceae</taxon>
        <taxon>Methanocaldococcus</taxon>
    </lineage>
</organism>
<name>Y1226_METJA</name>
<dbReference type="EC" id="7.2.2.-"/>
<dbReference type="EMBL" id="L77117">
    <property type="protein sequence ID" value="AAB99229.1"/>
    <property type="molecule type" value="Genomic_DNA"/>
</dbReference>
<dbReference type="PIR" id="A64453">
    <property type="entry name" value="A64453"/>
</dbReference>
<dbReference type="SMR" id="Q58623"/>
<dbReference type="FunCoup" id="Q58623">
    <property type="interactions" value="45"/>
</dbReference>
<dbReference type="STRING" id="243232.MJ_1226"/>
<dbReference type="TCDB" id="3.A.3.3.4">
    <property type="family name" value="the p-type atpase (p-atpase) superfamily"/>
</dbReference>
<dbReference type="PaxDb" id="243232-MJ_1226"/>
<dbReference type="EnsemblBacteria" id="AAB99229">
    <property type="protein sequence ID" value="AAB99229"/>
    <property type="gene ID" value="MJ_1226"/>
</dbReference>
<dbReference type="KEGG" id="mja:MJ_1226"/>
<dbReference type="eggNOG" id="arCOG01578">
    <property type="taxonomic scope" value="Archaea"/>
</dbReference>
<dbReference type="HOGENOM" id="CLU_002360_6_4_2"/>
<dbReference type="InParanoid" id="Q58623"/>
<dbReference type="PhylomeDB" id="Q58623"/>
<dbReference type="Proteomes" id="UP000000805">
    <property type="component" value="Chromosome"/>
</dbReference>
<dbReference type="GO" id="GO:0016020">
    <property type="term" value="C:membrane"/>
    <property type="evidence" value="ECO:0000318"/>
    <property type="project" value="GO_Central"/>
</dbReference>
<dbReference type="GO" id="GO:0005886">
    <property type="term" value="C:plasma membrane"/>
    <property type="evidence" value="ECO:0007669"/>
    <property type="project" value="UniProtKB-SubCell"/>
</dbReference>
<dbReference type="GO" id="GO:0005524">
    <property type="term" value="F:ATP binding"/>
    <property type="evidence" value="ECO:0007669"/>
    <property type="project" value="UniProtKB-KW"/>
</dbReference>
<dbReference type="GO" id="GO:0016887">
    <property type="term" value="F:ATP hydrolysis activity"/>
    <property type="evidence" value="ECO:0007669"/>
    <property type="project" value="InterPro"/>
</dbReference>
<dbReference type="GO" id="GO:0015662">
    <property type="term" value="F:P-type ion transporter activity"/>
    <property type="evidence" value="ECO:0000318"/>
    <property type="project" value="GO_Central"/>
</dbReference>
<dbReference type="GO" id="GO:0008553">
    <property type="term" value="F:P-type proton-exporting transporter activity"/>
    <property type="evidence" value="ECO:0007669"/>
    <property type="project" value="InterPro"/>
</dbReference>
<dbReference type="GO" id="GO:0034220">
    <property type="term" value="P:monoatomic ion transmembrane transport"/>
    <property type="evidence" value="ECO:0000318"/>
    <property type="project" value="GO_Central"/>
</dbReference>
<dbReference type="GO" id="GO:0120029">
    <property type="term" value="P:proton export across plasma membrane"/>
    <property type="evidence" value="ECO:0007669"/>
    <property type="project" value="InterPro"/>
</dbReference>
<dbReference type="CDD" id="cd02076">
    <property type="entry name" value="P-type_ATPase_H"/>
    <property type="match status" value="1"/>
</dbReference>
<dbReference type="FunFam" id="2.70.150.10:FF:000042">
    <property type="entry name" value="Plasma membrane ATPase"/>
    <property type="match status" value="1"/>
</dbReference>
<dbReference type="FunFam" id="3.40.1110.10:FF:000005">
    <property type="entry name" value="Plasma membrane ATPase"/>
    <property type="match status" value="1"/>
</dbReference>
<dbReference type="FunFam" id="3.40.50.1000:FF:000008">
    <property type="entry name" value="Plasma membrane ATPase"/>
    <property type="match status" value="1"/>
</dbReference>
<dbReference type="Gene3D" id="3.40.1110.10">
    <property type="entry name" value="Calcium-transporting ATPase, cytoplasmic domain N"/>
    <property type="match status" value="1"/>
</dbReference>
<dbReference type="Gene3D" id="2.70.150.10">
    <property type="entry name" value="Calcium-transporting ATPase, cytoplasmic transduction domain A"/>
    <property type="match status" value="1"/>
</dbReference>
<dbReference type="Gene3D" id="1.20.1110.10">
    <property type="entry name" value="Calcium-transporting ATPase, transmembrane domain"/>
    <property type="match status" value="1"/>
</dbReference>
<dbReference type="Gene3D" id="3.40.50.1000">
    <property type="entry name" value="HAD superfamily/HAD-like"/>
    <property type="match status" value="1"/>
</dbReference>
<dbReference type="InterPro" id="IPR004014">
    <property type="entry name" value="ATPase_P-typ_cation-transptr_N"/>
</dbReference>
<dbReference type="InterPro" id="IPR023299">
    <property type="entry name" value="ATPase_P-typ_cyto_dom_N"/>
</dbReference>
<dbReference type="InterPro" id="IPR018303">
    <property type="entry name" value="ATPase_P-typ_P_site"/>
</dbReference>
<dbReference type="InterPro" id="IPR023298">
    <property type="entry name" value="ATPase_P-typ_TM_dom_sf"/>
</dbReference>
<dbReference type="InterPro" id="IPR008250">
    <property type="entry name" value="ATPase_P-typ_transduc_dom_A_sf"/>
</dbReference>
<dbReference type="InterPro" id="IPR036412">
    <property type="entry name" value="HAD-like_sf"/>
</dbReference>
<dbReference type="InterPro" id="IPR023214">
    <property type="entry name" value="HAD_sf"/>
</dbReference>
<dbReference type="InterPro" id="IPR006534">
    <property type="entry name" value="P-type_ATPase_IIIA"/>
</dbReference>
<dbReference type="InterPro" id="IPR001757">
    <property type="entry name" value="P_typ_ATPase"/>
</dbReference>
<dbReference type="InterPro" id="IPR044492">
    <property type="entry name" value="P_typ_ATPase_HD_dom"/>
</dbReference>
<dbReference type="NCBIfam" id="TIGR01647">
    <property type="entry name" value="ATPase-IIIA_H"/>
    <property type="match status" value="1"/>
</dbReference>
<dbReference type="NCBIfam" id="TIGR01494">
    <property type="entry name" value="ATPase_P-type"/>
    <property type="match status" value="2"/>
</dbReference>
<dbReference type="PANTHER" id="PTHR42861">
    <property type="entry name" value="CALCIUM-TRANSPORTING ATPASE"/>
    <property type="match status" value="1"/>
</dbReference>
<dbReference type="Pfam" id="PF00690">
    <property type="entry name" value="Cation_ATPase_N"/>
    <property type="match status" value="1"/>
</dbReference>
<dbReference type="Pfam" id="PF00122">
    <property type="entry name" value="E1-E2_ATPase"/>
    <property type="match status" value="1"/>
</dbReference>
<dbReference type="Pfam" id="PF00702">
    <property type="entry name" value="Hydrolase"/>
    <property type="match status" value="1"/>
</dbReference>
<dbReference type="PRINTS" id="PR00119">
    <property type="entry name" value="CATATPASE"/>
</dbReference>
<dbReference type="PRINTS" id="PR00120">
    <property type="entry name" value="HATPASE"/>
</dbReference>
<dbReference type="SFLD" id="SFLDG00002">
    <property type="entry name" value="C1.7:_P-type_atpase_like"/>
    <property type="match status" value="1"/>
</dbReference>
<dbReference type="SFLD" id="SFLDF00027">
    <property type="entry name" value="p-type_atpase"/>
    <property type="match status" value="1"/>
</dbReference>
<dbReference type="SMART" id="SM00831">
    <property type="entry name" value="Cation_ATPase_N"/>
    <property type="match status" value="1"/>
</dbReference>
<dbReference type="SUPFAM" id="SSF81653">
    <property type="entry name" value="Calcium ATPase, transduction domain A"/>
    <property type="match status" value="1"/>
</dbReference>
<dbReference type="SUPFAM" id="SSF81665">
    <property type="entry name" value="Calcium ATPase, transmembrane domain M"/>
    <property type="match status" value="1"/>
</dbReference>
<dbReference type="SUPFAM" id="SSF56784">
    <property type="entry name" value="HAD-like"/>
    <property type="match status" value="1"/>
</dbReference>
<dbReference type="SUPFAM" id="SSF81660">
    <property type="entry name" value="Metal cation-transporting ATPase, ATP-binding domain N"/>
    <property type="match status" value="1"/>
</dbReference>
<dbReference type="PROSITE" id="PS00154">
    <property type="entry name" value="ATPASE_E1_E2"/>
    <property type="match status" value="1"/>
</dbReference>